<name>RS11_METAC</name>
<reference key="1">
    <citation type="journal article" date="2002" name="Genome Res.">
        <title>The genome of Methanosarcina acetivorans reveals extensive metabolic and physiological diversity.</title>
        <authorList>
            <person name="Galagan J.E."/>
            <person name="Nusbaum C."/>
            <person name="Roy A."/>
            <person name="Endrizzi M.G."/>
            <person name="Macdonald P."/>
            <person name="FitzHugh W."/>
            <person name="Calvo S."/>
            <person name="Engels R."/>
            <person name="Smirnov S."/>
            <person name="Atnoor D."/>
            <person name="Brown A."/>
            <person name="Allen N."/>
            <person name="Naylor J."/>
            <person name="Stange-Thomann N."/>
            <person name="DeArellano K."/>
            <person name="Johnson R."/>
            <person name="Linton L."/>
            <person name="McEwan P."/>
            <person name="McKernan K."/>
            <person name="Talamas J."/>
            <person name="Tirrell A."/>
            <person name="Ye W."/>
            <person name="Zimmer A."/>
            <person name="Barber R.D."/>
            <person name="Cann I."/>
            <person name="Graham D.E."/>
            <person name="Grahame D.A."/>
            <person name="Guss A.M."/>
            <person name="Hedderich R."/>
            <person name="Ingram-Smith C."/>
            <person name="Kuettner H.C."/>
            <person name="Krzycki J.A."/>
            <person name="Leigh J.A."/>
            <person name="Li W."/>
            <person name="Liu J."/>
            <person name="Mukhopadhyay B."/>
            <person name="Reeve J.N."/>
            <person name="Smith K."/>
            <person name="Springer T.A."/>
            <person name="Umayam L.A."/>
            <person name="White O."/>
            <person name="White R.H."/>
            <person name="de Macario E.C."/>
            <person name="Ferry J.G."/>
            <person name="Jarrell K.F."/>
            <person name="Jing H."/>
            <person name="Macario A.J.L."/>
            <person name="Paulsen I.T."/>
            <person name="Pritchett M."/>
            <person name="Sowers K.R."/>
            <person name="Swanson R.V."/>
            <person name="Zinder S.H."/>
            <person name="Lander E."/>
            <person name="Metcalf W.W."/>
            <person name="Birren B."/>
        </authorList>
    </citation>
    <scope>NUCLEOTIDE SEQUENCE [LARGE SCALE GENOMIC DNA]</scope>
    <source>
        <strain>ATCC 35395 / DSM 2834 / JCM 12185 / C2A</strain>
    </source>
</reference>
<feature type="chain" id="PRO_0000123270" description="Small ribosomal subunit protein uS11">
    <location>
        <begin position="1"/>
        <end position="126"/>
    </location>
</feature>
<dbReference type="EMBL" id="AE010299">
    <property type="protein sequence ID" value="AAM04534.1"/>
    <property type="molecule type" value="Genomic_DNA"/>
</dbReference>
<dbReference type="RefSeq" id="WP_011021138.1">
    <property type="nucleotide sequence ID" value="NC_003552.1"/>
</dbReference>
<dbReference type="SMR" id="Q8TRR0"/>
<dbReference type="FunCoup" id="Q8TRR0">
    <property type="interactions" value="166"/>
</dbReference>
<dbReference type="STRING" id="188937.MA_1110"/>
<dbReference type="EnsemblBacteria" id="AAM04534">
    <property type="protein sequence ID" value="AAM04534"/>
    <property type="gene ID" value="MA_1110"/>
</dbReference>
<dbReference type="GeneID" id="1472999"/>
<dbReference type="KEGG" id="mac:MA_1110"/>
<dbReference type="HOGENOM" id="CLU_072439_6_1_2"/>
<dbReference type="InParanoid" id="Q8TRR0"/>
<dbReference type="OrthoDB" id="12054at2157"/>
<dbReference type="PhylomeDB" id="Q8TRR0"/>
<dbReference type="Proteomes" id="UP000002487">
    <property type="component" value="Chromosome"/>
</dbReference>
<dbReference type="GO" id="GO:0022627">
    <property type="term" value="C:cytosolic small ribosomal subunit"/>
    <property type="evidence" value="ECO:0000318"/>
    <property type="project" value="GO_Central"/>
</dbReference>
<dbReference type="GO" id="GO:0019843">
    <property type="term" value="F:rRNA binding"/>
    <property type="evidence" value="ECO:0007669"/>
    <property type="project" value="UniProtKB-UniRule"/>
</dbReference>
<dbReference type="GO" id="GO:0003735">
    <property type="term" value="F:structural constituent of ribosome"/>
    <property type="evidence" value="ECO:0000318"/>
    <property type="project" value="GO_Central"/>
</dbReference>
<dbReference type="GO" id="GO:0006412">
    <property type="term" value="P:translation"/>
    <property type="evidence" value="ECO:0000318"/>
    <property type="project" value="GO_Central"/>
</dbReference>
<dbReference type="FunFam" id="3.30.420.80:FF:000007">
    <property type="entry name" value="30S ribosomal protein S11"/>
    <property type="match status" value="1"/>
</dbReference>
<dbReference type="Gene3D" id="3.30.420.80">
    <property type="entry name" value="Ribosomal protein S11"/>
    <property type="match status" value="1"/>
</dbReference>
<dbReference type="HAMAP" id="MF_01310">
    <property type="entry name" value="Ribosomal_uS11"/>
    <property type="match status" value="1"/>
</dbReference>
<dbReference type="InterPro" id="IPR001971">
    <property type="entry name" value="Ribosomal_uS11"/>
</dbReference>
<dbReference type="InterPro" id="IPR019961">
    <property type="entry name" value="Ribosomal_uS11_archaeal"/>
</dbReference>
<dbReference type="InterPro" id="IPR018102">
    <property type="entry name" value="Ribosomal_uS11_CS"/>
</dbReference>
<dbReference type="InterPro" id="IPR036967">
    <property type="entry name" value="Ribosomal_uS11_sf"/>
</dbReference>
<dbReference type="NCBIfam" id="TIGR03628">
    <property type="entry name" value="arch_S11P"/>
    <property type="match status" value="1"/>
</dbReference>
<dbReference type="NCBIfam" id="NF007176">
    <property type="entry name" value="PRK09607.1"/>
    <property type="match status" value="1"/>
</dbReference>
<dbReference type="PANTHER" id="PTHR11759">
    <property type="entry name" value="40S RIBOSOMAL PROTEIN S14/30S RIBOSOMAL PROTEIN S11"/>
    <property type="match status" value="1"/>
</dbReference>
<dbReference type="Pfam" id="PF00411">
    <property type="entry name" value="Ribosomal_S11"/>
    <property type="match status" value="1"/>
</dbReference>
<dbReference type="PIRSF" id="PIRSF002131">
    <property type="entry name" value="Ribosomal_S11"/>
    <property type="match status" value="1"/>
</dbReference>
<dbReference type="SUPFAM" id="SSF53137">
    <property type="entry name" value="Translational machinery components"/>
    <property type="match status" value="1"/>
</dbReference>
<dbReference type="PROSITE" id="PS00054">
    <property type="entry name" value="RIBOSOMAL_S11"/>
    <property type="match status" value="1"/>
</dbReference>
<comment type="function">
    <text evidence="1">Located on the platform of the 30S subunit.</text>
</comment>
<comment type="subunit">
    <text evidence="1">Part of the 30S ribosomal subunit.</text>
</comment>
<comment type="similarity">
    <text evidence="1">Belongs to the universal ribosomal protein uS11 family.</text>
</comment>
<evidence type="ECO:0000255" key="1">
    <source>
        <dbReference type="HAMAP-Rule" id="MF_01310"/>
    </source>
</evidence>
<evidence type="ECO:0000305" key="2"/>
<proteinExistence type="inferred from homology"/>
<gene>
    <name evidence="1" type="primary">rps11</name>
    <name type="ordered locus">MA_1110</name>
</gene>
<organism>
    <name type="scientific">Methanosarcina acetivorans (strain ATCC 35395 / DSM 2834 / JCM 12185 / C2A)</name>
    <dbReference type="NCBI Taxonomy" id="188937"/>
    <lineage>
        <taxon>Archaea</taxon>
        <taxon>Methanobacteriati</taxon>
        <taxon>Methanobacteriota</taxon>
        <taxon>Stenosarchaea group</taxon>
        <taxon>Methanomicrobia</taxon>
        <taxon>Methanosarcinales</taxon>
        <taxon>Methanosarcinaceae</taxon>
        <taxon>Methanosarcina</taxon>
    </lineage>
</organism>
<protein>
    <recommendedName>
        <fullName evidence="1">Small ribosomal subunit protein uS11</fullName>
    </recommendedName>
    <alternativeName>
        <fullName evidence="2">30S ribosomal protein S11</fullName>
    </alternativeName>
</protein>
<sequence length="126" mass="13302">MADMKWAVAHIKSSFNNTIITVTDITGAETIAKSSGGMVVKAARDESSPYTAMQMAGQLADQLKDKGINGIHIRVRAPGGNKQRSPGPGAQAAIRAFARAGIRIGRIEDVTPVPHDGTRPKGGRRV</sequence>
<accession>Q8TRR0</accession>
<keyword id="KW-1185">Reference proteome</keyword>
<keyword id="KW-0687">Ribonucleoprotein</keyword>
<keyword id="KW-0689">Ribosomal protein</keyword>
<keyword id="KW-0694">RNA-binding</keyword>
<keyword id="KW-0699">rRNA-binding</keyword>